<name>SUCC_RHIWR</name>
<protein>
    <recommendedName>
        <fullName evidence="1">Succinate--CoA ligase [ADP-forming] subunit beta</fullName>
        <ecNumber evidence="1">6.2.1.5</ecNumber>
    </recommendedName>
    <alternativeName>
        <fullName evidence="1">Succinyl-CoA synthetase subunit beta</fullName>
        <shortName evidence="1">SCS-beta</shortName>
    </alternativeName>
</protein>
<keyword id="KW-0067">ATP-binding</keyword>
<keyword id="KW-0436">Ligase</keyword>
<keyword id="KW-0460">Magnesium</keyword>
<keyword id="KW-0479">Metal-binding</keyword>
<keyword id="KW-0547">Nucleotide-binding</keyword>
<keyword id="KW-1185">Reference proteome</keyword>
<keyword id="KW-0816">Tricarboxylic acid cycle</keyword>
<sequence>MNIHEYQAKELLAKFGVAVPAGHAALTVDEAVEAAKKLPGPIWVVKAQIHAGGRGKGKFKELPADAKGGVRLSKSIDEVKANAADMLGNTLVTIQTGEAGKQVNRLYVTDGADIKSEYYLSMLVDRKTGRIAMIVSTEGGMDIEQVAHDTPEKIRTIVIDPAEGFQPHHGRAVAFALKLKGDLNKQAVKLAEQLYNAFIATDMSMLEVNPLVETTDGKLLVLDAKVSFDSNALYRHPDILALRDETEEDPAEIEASQYDLAYIKLDGDIGCMVNGAGLAMATMDIIKLNGMFPANFLDVGGGATKEKVTAAFKIILSDPAVKGILVNIFGGIMRCDIIAEGIIAAAKEVNLSVPLVVRLEGTNVQQGKDLLAGSGLPIVAADDLGDAARKIVAEVKKAA</sequence>
<accession>A5VB78</accession>
<comment type="function">
    <text evidence="1">Succinyl-CoA synthetase functions in the citric acid cycle (TCA), coupling the hydrolysis of succinyl-CoA to the synthesis of either ATP or GTP and thus represents the only step of substrate-level phosphorylation in the TCA. The beta subunit provides nucleotide specificity of the enzyme and binds the substrate succinate, while the binding sites for coenzyme A and phosphate are found in the alpha subunit.</text>
</comment>
<comment type="catalytic activity">
    <reaction evidence="1">
        <text>succinate + ATP + CoA = succinyl-CoA + ADP + phosphate</text>
        <dbReference type="Rhea" id="RHEA:17661"/>
        <dbReference type="ChEBI" id="CHEBI:30031"/>
        <dbReference type="ChEBI" id="CHEBI:30616"/>
        <dbReference type="ChEBI" id="CHEBI:43474"/>
        <dbReference type="ChEBI" id="CHEBI:57287"/>
        <dbReference type="ChEBI" id="CHEBI:57292"/>
        <dbReference type="ChEBI" id="CHEBI:456216"/>
        <dbReference type="EC" id="6.2.1.5"/>
    </reaction>
    <physiologicalReaction direction="right-to-left" evidence="1">
        <dbReference type="Rhea" id="RHEA:17663"/>
    </physiologicalReaction>
</comment>
<comment type="catalytic activity">
    <reaction evidence="1">
        <text>GTP + succinate + CoA = succinyl-CoA + GDP + phosphate</text>
        <dbReference type="Rhea" id="RHEA:22120"/>
        <dbReference type="ChEBI" id="CHEBI:30031"/>
        <dbReference type="ChEBI" id="CHEBI:37565"/>
        <dbReference type="ChEBI" id="CHEBI:43474"/>
        <dbReference type="ChEBI" id="CHEBI:57287"/>
        <dbReference type="ChEBI" id="CHEBI:57292"/>
        <dbReference type="ChEBI" id="CHEBI:58189"/>
    </reaction>
    <physiologicalReaction direction="right-to-left" evidence="1">
        <dbReference type="Rhea" id="RHEA:22122"/>
    </physiologicalReaction>
</comment>
<comment type="cofactor">
    <cofactor evidence="1">
        <name>Mg(2+)</name>
        <dbReference type="ChEBI" id="CHEBI:18420"/>
    </cofactor>
    <text evidence="1">Binds 1 Mg(2+) ion per subunit.</text>
</comment>
<comment type="pathway">
    <text evidence="1">Carbohydrate metabolism; tricarboxylic acid cycle; succinate from succinyl-CoA (ligase route): step 1/1.</text>
</comment>
<comment type="subunit">
    <text evidence="1">Heterotetramer of two alpha and two beta subunits.</text>
</comment>
<comment type="similarity">
    <text evidence="1">Belongs to the succinate/malate CoA ligase beta subunit family.</text>
</comment>
<evidence type="ECO:0000255" key="1">
    <source>
        <dbReference type="HAMAP-Rule" id="MF_00558"/>
    </source>
</evidence>
<proteinExistence type="inferred from homology"/>
<organism>
    <name type="scientific">Rhizorhabdus wittichii (strain DSM 6014 / CCUG 31198 / JCM 15750 / NBRC 105917 / EY 4224 / RW1)</name>
    <name type="common">Sphingomonas wittichii</name>
    <dbReference type="NCBI Taxonomy" id="392499"/>
    <lineage>
        <taxon>Bacteria</taxon>
        <taxon>Pseudomonadati</taxon>
        <taxon>Pseudomonadota</taxon>
        <taxon>Alphaproteobacteria</taxon>
        <taxon>Sphingomonadales</taxon>
        <taxon>Sphingomonadaceae</taxon>
        <taxon>Rhizorhabdus</taxon>
    </lineage>
</organism>
<dbReference type="EC" id="6.2.1.5" evidence="1"/>
<dbReference type="EMBL" id="CP000699">
    <property type="protein sequence ID" value="ABQ69544.1"/>
    <property type="molecule type" value="Genomic_DNA"/>
</dbReference>
<dbReference type="SMR" id="A5VB78"/>
<dbReference type="STRING" id="392499.Swit_3197"/>
<dbReference type="PaxDb" id="392499-Swit_3197"/>
<dbReference type="KEGG" id="swi:Swit_3197"/>
<dbReference type="eggNOG" id="COG0045">
    <property type="taxonomic scope" value="Bacteria"/>
</dbReference>
<dbReference type="HOGENOM" id="CLU_037430_0_2_5"/>
<dbReference type="OrthoDB" id="9802602at2"/>
<dbReference type="UniPathway" id="UPA00223">
    <property type="reaction ID" value="UER00999"/>
</dbReference>
<dbReference type="Proteomes" id="UP000001989">
    <property type="component" value="Chromosome"/>
</dbReference>
<dbReference type="GO" id="GO:0005829">
    <property type="term" value="C:cytosol"/>
    <property type="evidence" value="ECO:0007669"/>
    <property type="project" value="TreeGrafter"/>
</dbReference>
<dbReference type="GO" id="GO:0042709">
    <property type="term" value="C:succinate-CoA ligase complex"/>
    <property type="evidence" value="ECO:0007669"/>
    <property type="project" value="TreeGrafter"/>
</dbReference>
<dbReference type="GO" id="GO:0005524">
    <property type="term" value="F:ATP binding"/>
    <property type="evidence" value="ECO:0007669"/>
    <property type="project" value="UniProtKB-UniRule"/>
</dbReference>
<dbReference type="GO" id="GO:0000287">
    <property type="term" value="F:magnesium ion binding"/>
    <property type="evidence" value="ECO:0007669"/>
    <property type="project" value="UniProtKB-UniRule"/>
</dbReference>
<dbReference type="GO" id="GO:0004775">
    <property type="term" value="F:succinate-CoA ligase (ADP-forming) activity"/>
    <property type="evidence" value="ECO:0007669"/>
    <property type="project" value="UniProtKB-UniRule"/>
</dbReference>
<dbReference type="GO" id="GO:0004776">
    <property type="term" value="F:succinate-CoA ligase (GDP-forming) activity"/>
    <property type="evidence" value="ECO:0007669"/>
    <property type="project" value="RHEA"/>
</dbReference>
<dbReference type="GO" id="GO:0006104">
    <property type="term" value="P:succinyl-CoA metabolic process"/>
    <property type="evidence" value="ECO:0007669"/>
    <property type="project" value="TreeGrafter"/>
</dbReference>
<dbReference type="GO" id="GO:0006099">
    <property type="term" value="P:tricarboxylic acid cycle"/>
    <property type="evidence" value="ECO:0007669"/>
    <property type="project" value="UniProtKB-UniRule"/>
</dbReference>
<dbReference type="FunFam" id="3.30.1490.20:FF:000002">
    <property type="entry name" value="Succinate--CoA ligase [ADP-forming] subunit beta"/>
    <property type="match status" value="1"/>
</dbReference>
<dbReference type="FunFam" id="3.30.470.20:FF:000002">
    <property type="entry name" value="Succinate--CoA ligase [ADP-forming] subunit beta"/>
    <property type="match status" value="1"/>
</dbReference>
<dbReference type="FunFam" id="3.40.50.261:FF:000001">
    <property type="entry name" value="Succinate--CoA ligase [ADP-forming] subunit beta"/>
    <property type="match status" value="1"/>
</dbReference>
<dbReference type="Gene3D" id="3.30.1490.20">
    <property type="entry name" value="ATP-grasp fold, A domain"/>
    <property type="match status" value="1"/>
</dbReference>
<dbReference type="Gene3D" id="3.30.470.20">
    <property type="entry name" value="ATP-grasp fold, B domain"/>
    <property type="match status" value="1"/>
</dbReference>
<dbReference type="Gene3D" id="3.40.50.261">
    <property type="entry name" value="Succinyl-CoA synthetase domains"/>
    <property type="match status" value="1"/>
</dbReference>
<dbReference type="HAMAP" id="MF_00558">
    <property type="entry name" value="Succ_CoA_beta"/>
    <property type="match status" value="1"/>
</dbReference>
<dbReference type="InterPro" id="IPR011761">
    <property type="entry name" value="ATP-grasp"/>
</dbReference>
<dbReference type="InterPro" id="IPR013650">
    <property type="entry name" value="ATP-grasp_succ-CoA_synth-type"/>
</dbReference>
<dbReference type="InterPro" id="IPR013815">
    <property type="entry name" value="ATP_grasp_subdomain_1"/>
</dbReference>
<dbReference type="InterPro" id="IPR005811">
    <property type="entry name" value="SUCC_ACL_C"/>
</dbReference>
<dbReference type="InterPro" id="IPR005809">
    <property type="entry name" value="Succ_CoA_ligase-like_bsu"/>
</dbReference>
<dbReference type="InterPro" id="IPR016102">
    <property type="entry name" value="Succinyl-CoA_synth-like"/>
</dbReference>
<dbReference type="NCBIfam" id="NF001913">
    <property type="entry name" value="PRK00696.1"/>
    <property type="match status" value="1"/>
</dbReference>
<dbReference type="NCBIfam" id="TIGR01016">
    <property type="entry name" value="sucCoAbeta"/>
    <property type="match status" value="1"/>
</dbReference>
<dbReference type="PANTHER" id="PTHR11815:SF10">
    <property type="entry name" value="SUCCINATE--COA LIGASE [GDP-FORMING] SUBUNIT BETA, MITOCHONDRIAL"/>
    <property type="match status" value="1"/>
</dbReference>
<dbReference type="PANTHER" id="PTHR11815">
    <property type="entry name" value="SUCCINYL-COA SYNTHETASE BETA CHAIN"/>
    <property type="match status" value="1"/>
</dbReference>
<dbReference type="Pfam" id="PF08442">
    <property type="entry name" value="ATP-grasp_2"/>
    <property type="match status" value="1"/>
</dbReference>
<dbReference type="Pfam" id="PF00549">
    <property type="entry name" value="Ligase_CoA"/>
    <property type="match status" value="1"/>
</dbReference>
<dbReference type="PIRSF" id="PIRSF001554">
    <property type="entry name" value="SucCS_beta"/>
    <property type="match status" value="1"/>
</dbReference>
<dbReference type="SUPFAM" id="SSF56059">
    <property type="entry name" value="Glutathione synthetase ATP-binding domain-like"/>
    <property type="match status" value="1"/>
</dbReference>
<dbReference type="SUPFAM" id="SSF52210">
    <property type="entry name" value="Succinyl-CoA synthetase domains"/>
    <property type="match status" value="1"/>
</dbReference>
<dbReference type="PROSITE" id="PS50975">
    <property type="entry name" value="ATP_GRASP"/>
    <property type="match status" value="1"/>
</dbReference>
<gene>
    <name evidence="1" type="primary">sucC</name>
    <name type="ordered locus">Swit_3197</name>
</gene>
<feature type="chain" id="PRO_1000082240" description="Succinate--CoA ligase [ADP-forming] subunit beta">
    <location>
        <begin position="1"/>
        <end position="399"/>
    </location>
</feature>
<feature type="domain" description="ATP-grasp" evidence="1">
    <location>
        <begin position="9"/>
        <end position="254"/>
    </location>
</feature>
<feature type="binding site" evidence="1">
    <location>
        <position position="46"/>
    </location>
    <ligand>
        <name>ATP</name>
        <dbReference type="ChEBI" id="CHEBI:30616"/>
    </ligand>
</feature>
<feature type="binding site" evidence="1">
    <location>
        <begin position="53"/>
        <end position="55"/>
    </location>
    <ligand>
        <name>ATP</name>
        <dbReference type="ChEBI" id="CHEBI:30616"/>
    </ligand>
</feature>
<feature type="binding site" evidence="1">
    <location>
        <position position="112"/>
    </location>
    <ligand>
        <name>ATP</name>
        <dbReference type="ChEBI" id="CHEBI:30616"/>
    </ligand>
</feature>
<feature type="binding site" evidence="1">
    <location>
        <position position="117"/>
    </location>
    <ligand>
        <name>ATP</name>
        <dbReference type="ChEBI" id="CHEBI:30616"/>
    </ligand>
</feature>
<feature type="binding site" evidence="1">
    <location>
        <position position="209"/>
    </location>
    <ligand>
        <name>Mg(2+)</name>
        <dbReference type="ChEBI" id="CHEBI:18420"/>
    </ligand>
</feature>
<feature type="binding site" evidence="1">
    <location>
        <position position="223"/>
    </location>
    <ligand>
        <name>Mg(2+)</name>
        <dbReference type="ChEBI" id="CHEBI:18420"/>
    </ligand>
</feature>
<feature type="binding site" evidence="1">
    <location>
        <position position="274"/>
    </location>
    <ligand>
        <name>substrate</name>
        <note>ligand shared with subunit alpha</note>
    </ligand>
</feature>
<feature type="binding site" evidence="1">
    <location>
        <begin position="331"/>
        <end position="333"/>
    </location>
    <ligand>
        <name>substrate</name>
        <note>ligand shared with subunit alpha</note>
    </ligand>
</feature>
<reference key="1">
    <citation type="journal article" date="2010" name="J. Bacteriol.">
        <title>Genome sequence of the dioxin-mineralizing bacterium Sphingomonas wittichii RW1.</title>
        <authorList>
            <person name="Miller T.R."/>
            <person name="Delcher A.L."/>
            <person name="Salzberg S.L."/>
            <person name="Saunders E."/>
            <person name="Detter J.C."/>
            <person name="Halden R.U."/>
        </authorList>
    </citation>
    <scope>NUCLEOTIDE SEQUENCE [LARGE SCALE GENOMIC DNA]</scope>
    <source>
        <strain>DSM 6014 / CCUG 31198 / JCM 15750 / NBRC 105917 / EY 4224 / RW1</strain>
    </source>
</reference>